<comment type="function">
    <text evidence="1">Involved in allosteric regulation of aspartate carbamoyltransferase.</text>
</comment>
<comment type="cofactor">
    <cofactor evidence="1">
        <name>Zn(2+)</name>
        <dbReference type="ChEBI" id="CHEBI:29105"/>
    </cofactor>
    <text evidence="1">Binds 1 zinc ion per subunit.</text>
</comment>
<comment type="subunit">
    <text evidence="1">Contains catalytic and regulatory chains.</text>
</comment>
<comment type="similarity">
    <text evidence="1">Belongs to the PyrI family.</text>
</comment>
<comment type="sequence caution" evidence="2">
    <conflict type="erroneous initiation">
        <sequence resource="EMBL-CDS" id="CAG18904"/>
    </conflict>
</comment>
<organism>
    <name type="scientific">Photobacterium profundum (strain SS9)</name>
    <dbReference type="NCBI Taxonomy" id="298386"/>
    <lineage>
        <taxon>Bacteria</taxon>
        <taxon>Pseudomonadati</taxon>
        <taxon>Pseudomonadota</taxon>
        <taxon>Gammaproteobacteria</taxon>
        <taxon>Vibrionales</taxon>
        <taxon>Vibrionaceae</taxon>
        <taxon>Photobacterium</taxon>
    </lineage>
</organism>
<proteinExistence type="inferred from homology"/>
<accession>Q6LUX1</accession>
<reference key="1">
    <citation type="journal article" date="2005" name="Science">
        <title>Life at depth: Photobacterium profundum genome sequence and expression analysis.</title>
        <authorList>
            <person name="Vezzi A."/>
            <person name="Campanaro S."/>
            <person name="D'Angelo M."/>
            <person name="Simonato F."/>
            <person name="Vitulo N."/>
            <person name="Lauro F.M."/>
            <person name="Cestaro A."/>
            <person name="Malacrida G."/>
            <person name="Simionati B."/>
            <person name="Cannata N."/>
            <person name="Romualdi C."/>
            <person name="Bartlett D.H."/>
            <person name="Valle G."/>
        </authorList>
    </citation>
    <scope>NUCLEOTIDE SEQUENCE [LARGE SCALE GENOMIC DNA]</scope>
    <source>
        <strain>ATCC BAA-1253 / SS9</strain>
    </source>
</reference>
<dbReference type="EMBL" id="CR378664">
    <property type="protein sequence ID" value="CAG18904.1"/>
    <property type="status" value="ALT_INIT"/>
    <property type="molecule type" value="Genomic_DNA"/>
</dbReference>
<dbReference type="RefSeq" id="WP_041393868.1">
    <property type="nucleotide sequence ID" value="NC_006370.1"/>
</dbReference>
<dbReference type="SMR" id="Q6LUX1"/>
<dbReference type="STRING" id="298386.PBPRA0473"/>
<dbReference type="KEGG" id="ppr:PBPRA0473"/>
<dbReference type="eggNOG" id="COG1781">
    <property type="taxonomic scope" value="Bacteria"/>
</dbReference>
<dbReference type="HOGENOM" id="CLU_128576_0_0_6"/>
<dbReference type="Proteomes" id="UP000000593">
    <property type="component" value="Chromosome 1"/>
</dbReference>
<dbReference type="GO" id="GO:0009347">
    <property type="term" value="C:aspartate carbamoyltransferase complex"/>
    <property type="evidence" value="ECO:0007669"/>
    <property type="project" value="InterPro"/>
</dbReference>
<dbReference type="GO" id="GO:0046872">
    <property type="term" value="F:metal ion binding"/>
    <property type="evidence" value="ECO:0007669"/>
    <property type="project" value="UniProtKB-KW"/>
</dbReference>
<dbReference type="GO" id="GO:0006207">
    <property type="term" value="P:'de novo' pyrimidine nucleobase biosynthetic process"/>
    <property type="evidence" value="ECO:0007669"/>
    <property type="project" value="InterPro"/>
</dbReference>
<dbReference type="GO" id="GO:0006221">
    <property type="term" value="P:pyrimidine nucleotide biosynthetic process"/>
    <property type="evidence" value="ECO:0007669"/>
    <property type="project" value="UniProtKB-UniRule"/>
</dbReference>
<dbReference type="Gene3D" id="2.30.30.20">
    <property type="entry name" value="Aspartate carbamoyltransferase regulatory subunit, C-terminal domain"/>
    <property type="match status" value="1"/>
</dbReference>
<dbReference type="Gene3D" id="3.30.70.140">
    <property type="entry name" value="Aspartate carbamoyltransferase regulatory subunit, N-terminal domain"/>
    <property type="match status" value="1"/>
</dbReference>
<dbReference type="HAMAP" id="MF_00002">
    <property type="entry name" value="Asp_carb_tr_reg"/>
    <property type="match status" value="1"/>
</dbReference>
<dbReference type="InterPro" id="IPR020545">
    <property type="entry name" value="Asp_carbamoyltransf_reg_N"/>
</dbReference>
<dbReference type="InterPro" id="IPR002801">
    <property type="entry name" value="Asp_carbamoylTrfase_reg"/>
</dbReference>
<dbReference type="InterPro" id="IPR020542">
    <property type="entry name" value="Asp_carbamoyltrfase_reg_C"/>
</dbReference>
<dbReference type="InterPro" id="IPR036792">
    <property type="entry name" value="Asp_carbatrfase_reg_C_sf"/>
</dbReference>
<dbReference type="InterPro" id="IPR036793">
    <property type="entry name" value="Asp_carbatrfase_reg_N_sf"/>
</dbReference>
<dbReference type="NCBIfam" id="TIGR00240">
    <property type="entry name" value="ATCase_reg"/>
    <property type="match status" value="1"/>
</dbReference>
<dbReference type="PANTHER" id="PTHR35805">
    <property type="entry name" value="ASPARTATE CARBAMOYLTRANSFERASE REGULATORY CHAIN"/>
    <property type="match status" value="1"/>
</dbReference>
<dbReference type="PANTHER" id="PTHR35805:SF1">
    <property type="entry name" value="ASPARTATE CARBAMOYLTRANSFERASE REGULATORY CHAIN"/>
    <property type="match status" value="1"/>
</dbReference>
<dbReference type="Pfam" id="PF01948">
    <property type="entry name" value="PyrI"/>
    <property type="match status" value="1"/>
</dbReference>
<dbReference type="Pfam" id="PF02748">
    <property type="entry name" value="PyrI_C"/>
    <property type="match status" value="1"/>
</dbReference>
<dbReference type="SUPFAM" id="SSF57825">
    <property type="entry name" value="Aspartate carbamoyltransferase, Regulatory-chain, C-terminal domain"/>
    <property type="match status" value="1"/>
</dbReference>
<dbReference type="SUPFAM" id="SSF54893">
    <property type="entry name" value="Aspartate carbamoyltransferase, Regulatory-chain, N-terminal domain"/>
    <property type="match status" value="1"/>
</dbReference>
<feature type="chain" id="PRO_0000142310" description="Aspartate carbamoyltransferase regulatory chain">
    <location>
        <begin position="1"/>
        <end position="154"/>
    </location>
</feature>
<feature type="binding site" evidence="1">
    <location>
        <position position="109"/>
    </location>
    <ligand>
        <name>Zn(2+)</name>
        <dbReference type="ChEBI" id="CHEBI:29105"/>
    </ligand>
</feature>
<feature type="binding site" evidence="1">
    <location>
        <position position="114"/>
    </location>
    <ligand>
        <name>Zn(2+)</name>
        <dbReference type="ChEBI" id="CHEBI:29105"/>
    </ligand>
</feature>
<feature type="binding site" evidence="1">
    <location>
        <position position="138"/>
    </location>
    <ligand>
        <name>Zn(2+)</name>
        <dbReference type="ChEBI" id="CHEBI:29105"/>
    </ligand>
</feature>
<feature type="binding site" evidence="1">
    <location>
        <position position="141"/>
    </location>
    <ligand>
        <name>Zn(2+)</name>
        <dbReference type="ChEBI" id="CHEBI:29105"/>
    </ligand>
</feature>
<protein>
    <recommendedName>
        <fullName evidence="1">Aspartate carbamoyltransferase regulatory chain</fullName>
    </recommendedName>
</protein>
<keyword id="KW-0479">Metal-binding</keyword>
<keyword id="KW-0665">Pyrimidine biosynthesis</keyword>
<keyword id="KW-1185">Reference proteome</keyword>
<keyword id="KW-0862">Zinc</keyword>
<name>PYRI_PHOPR</name>
<gene>
    <name evidence="1" type="primary">pyrI</name>
    <name type="ordered locus">PBPRA0473</name>
</gene>
<sequence>MTKETQLQVEAIKNGSVIDHIPANVGIKVLKLFKLHKTNQRVTIGLNLPSSAMGAKDLIKIENVYVSEEQANQLALYAPHATVNQIENYDVAKKLTLELPKKINAIFECPNSNCITHNEPVDSSFTVINKNDDIQLKCKYCEKVFSREIVTERN</sequence>
<evidence type="ECO:0000255" key="1">
    <source>
        <dbReference type="HAMAP-Rule" id="MF_00002"/>
    </source>
</evidence>
<evidence type="ECO:0000305" key="2"/>